<gene>
    <name evidence="1" type="primary">pyrB</name>
    <name type="ordered locus">Tola_2803</name>
</gene>
<accession>C4LBX2</accession>
<sequence length="307" mass="34215">MANPLYKKNILSIADLSRTDLELVVQTASQLKQSPRHDLLQHKVIASCFFEASTRTRLSFETAVHRLGGSVIGFADAGNTSLAKKGETLADSVRVITSYTDAFVIRHPQEGAARLSAEFSSVPVINAGDGSNQHPTQTLLDLFSIYETQGTLDGLKLAFVGDLKYGRTVHSLAQALSLFGARFYFISPEALAMPDYICEELTEKGIEFSFHDTIEEVMPELDILYMTRVQKERFEESEYRHIAAKFVLSADELKTAKPNMKILHPLPRVDEIHTDVDDTNHAYYFQQAGNGVYARQALLALVLNEEV</sequence>
<protein>
    <recommendedName>
        <fullName evidence="1">Aspartate carbamoyltransferase catalytic subunit</fullName>
        <ecNumber evidence="1">2.1.3.2</ecNumber>
    </recommendedName>
    <alternativeName>
        <fullName evidence="1">Aspartate transcarbamylase</fullName>
        <shortName evidence="1">ATCase</shortName>
    </alternativeName>
</protein>
<feature type="chain" id="PRO_1000201608" description="Aspartate carbamoyltransferase catalytic subunit">
    <location>
        <begin position="1"/>
        <end position="307"/>
    </location>
</feature>
<feature type="binding site" evidence="1">
    <location>
        <position position="55"/>
    </location>
    <ligand>
        <name>carbamoyl phosphate</name>
        <dbReference type="ChEBI" id="CHEBI:58228"/>
    </ligand>
</feature>
<feature type="binding site" evidence="1">
    <location>
        <position position="56"/>
    </location>
    <ligand>
        <name>carbamoyl phosphate</name>
        <dbReference type="ChEBI" id="CHEBI:58228"/>
    </ligand>
</feature>
<feature type="binding site" evidence="1">
    <location>
        <position position="85"/>
    </location>
    <ligand>
        <name>L-aspartate</name>
        <dbReference type="ChEBI" id="CHEBI:29991"/>
    </ligand>
</feature>
<feature type="binding site" evidence="1">
    <location>
        <position position="106"/>
    </location>
    <ligand>
        <name>carbamoyl phosphate</name>
        <dbReference type="ChEBI" id="CHEBI:58228"/>
    </ligand>
</feature>
<feature type="binding site" evidence="1">
    <location>
        <position position="134"/>
    </location>
    <ligand>
        <name>carbamoyl phosphate</name>
        <dbReference type="ChEBI" id="CHEBI:58228"/>
    </ligand>
</feature>
<feature type="binding site" evidence="1">
    <location>
        <position position="137"/>
    </location>
    <ligand>
        <name>carbamoyl phosphate</name>
        <dbReference type="ChEBI" id="CHEBI:58228"/>
    </ligand>
</feature>
<feature type="binding site" evidence="1">
    <location>
        <position position="167"/>
    </location>
    <ligand>
        <name>L-aspartate</name>
        <dbReference type="ChEBI" id="CHEBI:29991"/>
    </ligand>
</feature>
<feature type="binding site" evidence="1">
    <location>
        <position position="228"/>
    </location>
    <ligand>
        <name>L-aspartate</name>
        <dbReference type="ChEBI" id="CHEBI:29991"/>
    </ligand>
</feature>
<feature type="binding site" evidence="1">
    <location>
        <position position="266"/>
    </location>
    <ligand>
        <name>carbamoyl phosphate</name>
        <dbReference type="ChEBI" id="CHEBI:58228"/>
    </ligand>
</feature>
<feature type="binding site" evidence="1">
    <location>
        <position position="267"/>
    </location>
    <ligand>
        <name>carbamoyl phosphate</name>
        <dbReference type="ChEBI" id="CHEBI:58228"/>
    </ligand>
</feature>
<reference key="1">
    <citation type="submission" date="2009-05" db="EMBL/GenBank/DDBJ databases">
        <title>Complete sequence of Tolumonas auensis DSM 9187.</title>
        <authorList>
            <consortium name="US DOE Joint Genome Institute"/>
            <person name="Lucas S."/>
            <person name="Copeland A."/>
            <person name="Lapidus A."/>
            <person name="Glavina del Rio T."/>
            <person name="Tice H."/>
            <person name="Bruce D."/>
            <person name="Goodwin L."/>
            <person name="Pitluck S."/>
            <person name="Chertkov O."/>
            <person name="Brettin T."/>
            <person name="Detter J.C."/>
            <person name="Han C."/>
            <person name="Larimer F."/>
            <person name="Land M."/>
            <person name="Hauser L."/>
            <person name="Kyrpides N."/>
            <person name="Mikhailova N."/>
            <person name="Spring S."/>
            <person name="Beller H."/>
        </authorList>
    </citation>
    <scope>NUCLEOTIDE SEQUENCE [LARGE SCALE GENOMIC DNA]</scope>
    <source>
        <strain>DSM 9187 / NBRC 110442 / TA 4</strain>
    </source>
</reference>
<dbReference type="EC" id="2.1.3.2" evidence="1"/>
<dbReference type="EMBL" id="CP001616">
    <property type="protein sequence ID" value="ACQ94396.1"/>
    <property type="molecule type" value="Genomic_DNA"/>
</dbReference>
<dbReference type="RefSeq" id="WP_015879845.1">
    <property type="nucleotide sequence ID" value="NC_012691.1"/>
</dbReference>
<dbReference type="SMR" id="C4LBX2"/>
<dbReference type="STRING" id="595494.Tola_2803"/>
<dbReference type="KEGG" id="tau:Tola_2803"/>
<dbReference type="eggNOG" id="COG0540">
    <property type="taxonomic scope" value="Bacteria"/>
</dbReference>
<dbReference type="HOGENOM" id="CLU_043846_1_2_6"/>
<dbReference type="OrthoDB" id="9774690at2"/>
<dbReference type="UniPathway" id="UPA00070">
    <property type="reaction ID" value="UER00116"/>
</dbReference>
<dbReference type="Proteomes" id="UP000009073">
    <property type="component" value="Chromosome"/>
</dbReference>
<dbReference type="GO" id="GO:0005829">
    <property type="term" value="C:cytosol"/>
    <property type="evidence" value="ECO:0007669"/>
    <property type="project" value="TreeGrafter"/>
</dbReference>
<dbReference type="GO" id="GO:0016597">
    <property type="term" value="F:amino acid binding"/>
    <property type="evidence" value="ECO:0007669"/>
    <property type="project" value="InterPro"/>
</dbReference>
<dbReference type="GO" id="GO:0004070">
    <property type="term" value="F:aspartate carbamoyltransferase activity"/>
    <property type="evidence" value="ECO:0007669"/>
    <property type="project" value="UniProtKB-UniRule"/>
</dbReference>
<dbReference type="GO" id="GO:0006207">
    <property type="term" value="P:'de novo' pyrimidine nucleobase biosynthetic process"/>
    <property type="evidence" value="ECO:0007669"/>
    <property type="project" value="InterPro"/>
</dbReference>
<dbReference type="GO" id="GO:0044205">
    <property type="term" value="P:'de novo' UMP biosynthetic process"/>
    <property type="evidence" value="ECO:0007669"/>
    <property type="project" value="UniProtKB-UniRule"/>
</dbReference>
<dbReference type="GO" id="GO:0006520">
    <property type="term" value="P:amino acid metabolic process"/>
    <property type="evidence" value="ECO:0007669"/>
    <property type="project" value="InterPro"/>
</dbReference>
<dbReference type="FunFam" id="3.40.50.1370:FF:000001">
    <property type="entry name" value="Aspartate carbamoyltransferase"/>
    <property type="match status" value="1"/>
</dbReference>
<dbReference type="FunFam" id="3.40.50.1370:FF:000002">
    <property type="entry name" value="Aspartate carbamoyltransferase 2"/>
    <property type="match status" value="1"/>
</dbReference>
<dbReference type="Gene3D" id="3.40.50.1370">
    <property type="entry name" value="Aspartate/ornithine carbamoyltransferase"/>
    <property type="match status" value="2"/>
</dbReference>
<dbReference type="HAMAP" id="MF_00001">
    <property type="entry name" value="Asp_carb_tr"/>
    <property type="match status" value="1"/>
</dbReference>
<dbReference type="InterPro" id="IPR006132">
    <property type="entry name" value="Asp/Orn_carbamoyltranf_P-bd"/>
</dbReference>
<dbReference type="InterPro" id="IPR006130">
    <property type="entry name" value="Asp/Orn_carbamoylTrfase"/>
</dbReference>
<dbReference type="InterPro" id="IPR036901">
    <property type="entry name" value="Asp/Orn_carbamoylTrfase_sf"/>
</dbReference>
<dbReference type="InterPro" id="IPR002082">
    <property type="entry name" value="Asp_carbamoyltransf"/>
</dbReference>
<dbReference type="InterPro" id="IPR006131">
    <property type="entry name" value="Asp_carbamoyltransf_Asp/Orn-bd"/>
</dbReference>
<dbReference type="NCBIfam" id="TIGR00670">
    <property type="entry name" value="asp_carb_tr"/>
    <property type="match status" value="1"/>
</dbReference>
<dbReference type="NCBIfam" id="NF002032">
    <property type="entry name" value="PRK00856.1"/>
    <property type="match status" value="1"/>
</dbReference>
<dbReference type="PANTHER" id="PTHR45753:SF6">
    <property type="entry name" value="ASPARTATE CARBAMOYLTRANSFERASE"/>
    <property type="match status" value="1"/>
</dbReference>
<dbReference type="PANTHER" id="PTHR45753">
    <property type="entry name" value="ORNITHINE CARBAMOYLTRANSFERASE, MITOCHONDRIAL"/>
    <property type="match status" value="1"/>
</dbReference>
<dbReference type="Pfam" id="PF00185">
    <property type="entry name" value="OTCace"/>
    <property type="match status" value="1"/>
</dbReference>
<dbReference type="Pfam" id="PF02729">
    <property type="entry name" value="OTCace_N"/>
    <property type="match status" value="1"/>
</dbReference>
<dbReference type="PRINTS" id="PR00100">
    <property type="entry name" value="AOTCASE"/>
</dbReference>
<dbReference type="PRINTS" id="PR00101">
    <property type="entry name" value="ATCASE"/>
</dbReference>
<dbReference type="SUPFAM" id="SSF53671">
    <property type="entry name" value="Aspartate/ornithine carbamoyltransferase"/>
    <property type="match status" value="1"/>
</dbReference>
<dbReference type="PROSITE" id="PS00097">
    <property type="entry name" value="CARBAMOYLTRANSFERASE"/>
    <property type="match status" value="1"/>
</dbReference>
<comment type="function">
    <text evidence="1">Catalyzes the condensation of carbamoyl phosphate and aspartate to form carbamoyl aspartate and inorganic phosphate, the committed step in the de novo pyrimidine nucleotide biosynthesis pathway.</text>
</comment>
<comment type="catalytic activity">
    <reaction evidence="1">
        <text>carbamoyl phosphate + L-aspartate = N-carbamoyl-L-aspartate + phosphate + H(+)</text>
        <dbReference type="Rhea" id="RHEA:20013"/>
        <dbReference type="ChEBI" id="CHEBI:15378"/>
        <dbReference type="ChEBI" id="CHEBI:29991"/>
        <dbReference type="ChEBI" id="CHEBI:32814"/>
        <dbReference type="ChEBI" id="CHEBI:43474"/>
        <dbReference type="ChEBI" id="CHEBI:58228"/>
        <dbReference type="EC" id="2.1.3.2"/>
    </reaction>
</comment>
<comment type="pathway">
    <text evidence="1">Pyrimidine metabolism; UMP biosynthesis via de novo pathway; (S)-dihydroorotate from bicarbonate: step 2/3.</text>
</comment>
<comment type="subunit">
    <text evidence="1">Heterododecamer (2C3:3R2) of six catalytic PyrB chains organized as two trimers (C3), and six regulatory PyrI chains organized as three dimers (R2).</text>
</comment>
<comment type="similarity">
    <text evidence="1">Belongs to the aspartate/ornithine carbamoyltransferase superfamily. ATCase family.</text>
</comment>
<organism>
    <name type="scientific">Tolumonas auensis (strain DSM 9187 / NBRC 110442 / TA 4)</name>
    <dbReference type="NCBI Taxonomy" id="595494"/>
    <lineage>
        <taxon>Bacteria</taxon>
        <taxon>Pseudomonadati</taxon>
        <taxon>Pseudomonadota</taxon>
        <taxon>Gammaproteobacteria</taxon>
        <taxon>Aeromonadales</taxon>
        <taxon>Aeromonadaceae</taxon>
        <taxon>Tolumonas</taxon>
    </lineage>
</organism>
<name>PYRB_TOLAT</name>
<evidence type="ECO:0000255" key="1">
    <source>
        <dbReference type="HAMAP-Rule" id="MF_00001"/>
    </source>
</evidence>
<keyword id="KW-0665">Pyrimidine biosynthesis</keyword>
<keyword id="KW-1185">Reference proteome</keyword>
<keyword id="KW-0808">Transferase</keyword>
<proteinExistence type="inferred from homology"/>